<comment type="function">
    <text evidence="1">Condenses 4-methyl-5-(beta-hydroxyethyl)thiazole monophosphate (THZ-P) and 2-methyl-4-amino-5-hydroxymethyl pyrimidine pyrophosphate (HMP-PP) to form thiamine monophosphate (TMP).</text>
</comment>
<comment type="catalytic activity">
    <reaction evidence="1">
        <text>2-[(2R,5Z)-2-carboxy-4-methylthiazol-5(2H)-ylidene]ethyl phosphate + 4-amino-2-methyl-5-(diphosphooxymethyl)pyrimidine + 2 H(+) = thiamine phosphate + CO2 + diphosphate</text>
        <dbReference type="Rhea" id="RHEA:47844"/>
        <dbReference type="ChEBI" id="CHEBI:15378"/>
        <dbReference type="ChEBI" id="CHEBI:16526"/>
        <dbReference type="ChEBI" id="CHEBI:33019"/>
        <dbReference type="ChEBI" id="CHEBI:37575"/>
        <dbReference type="ChEBI" id="CHEBI:57841"/>
        <dbReference type="ChEBI" id="CHEBI:62899"/>
        <dbReference type="EC" id="2.5.1.3"/>
    </reaction>
</comment>
<comment type="catalytic activity">
    <reaction evidence="1">
        <text>2-(2-carboxy-4-methylthiazol-5-yl)ethyl phosphate + 4-amino-2-methyl-5-(diphosphooxymethyl)pyrimidine + 2 H(+) = thiamine phosphate + CO2 + diphosphate</text>
        <dbReference type="Rhea" id="RHEA:47848"/>
        <dbReference type="ChEBI" id="CHEBI:15378"/>
        <dbReference type="ChEBI" id="CHEBI:16526"/>
        <dbReference type="ChEBI" id="CHEBI:33019"/>
        <dbReference type="ChEBI" id="CHEBI:37575"/>
        <dbReference type="ChEBI" id="CHEBI:57841"/>
        <dbReference type="ChEBI" id="CHEBI:62890"/>
        <dbReference type="EC" id="2.5.1.3"/>
    </reaction>
</comment>
<comment type="catalytic activity">
    <reaction evidence="1">
        <text>4-methyl-5-(2-phosphooxyethyl)-thiazole + 4-amino-2-methyl-5-(diphosphooxymethyl)pyrimidine + H(+) = thiamine phosphate + diphosphate</text>
        <dbReference type="Rhea" id="RHEA:22328"/>
        <dbReference type="ChEBI" id="CHEBI:15378"/>
        <dbReference type="ChEBI" id="CHEBI:33019"/>
        <dbReference type="ChEBI" id="CHEBI:37575"/>
        <dbReference type="ChEBI" id="CHEBI:57841"/>
        <dbReference type="ChEBI" id="CHEBI:58296"/>
        <dbReference type="EC" id="2.5.1.3"/>
    </reaction>
</comment>
<comment type="cofactor">
    <cofactor evidence="1">
        <name>Mg(2+)</name>
        <dbReference type="ChEBI" id="CHEBI:18420"/>
    </cofactor>
    <text evidence="1">Binds 1 Mg(2+) ion per subunit.</text>
</comment>
<comment type="pathway">
    <text evidence="1">Cofactor biosynthesis; thiamine diphosphate biosynthesis; thiamine phosphate from 4-amino-2-methyl-5-diphosphomethylpyrimidine and 4-methyl-5-(2-phosphoethyl)-thiazole: step 1/1.</text>
</comment>
<comment type="similarity">
    <text evidence="1">Belongs to the thiamine-phosphate synthase family.</text>
</comment>
<accession>Q02SE4</accession>
<sequence length="209" mass="22200">MKLRGLYAITDSQLLDDGRLLPYVEAALRGGARLLQYRDKSSDQARRLREAESLRELCERYGAQLIVNDDAELAARLGVGLHLGQTDGSLSAARALLGRQAIIGATCHARLELAEQAVAEGASYVAFGRFFNSSTKPGAPAASVELLDQARPRLHLPITAIGGISLDTAPGLIARGVDLVAVIHALFAAASAAEVERRARAFSALFEPA</sequence>
<dbReference type="EC" id="2.5.1.3" evidence="1"/>
<dbReference type="EMBL" id="CP000438">
    <property type="protein sequence ID" value="ABJ13251.1"/>
    <property type="molecule type" value="Genomic_DNA"/>
</dbReference>
<dbReference type="RefSeq" id="WP_003132524.1">
    <property type="nucleotide sequence ID" value="NZ_CP034244.1"/>
</dbReference>
<dbReference type="SMR" id="Q02SE4"/>
<dbReference type="KEGG" id="pau:PA14_12400"/>
<dbReference type="PseudoCAP" id="PA14_12400"/>
<dbReference type="HOGENOM" id="CLU_018272_3_1_6"/>
<dbReference type="BioCyc" id="PAER208963:G1G74-1028-MONOMER"/>
<dbReference type="UniPathway" id="UPA00060">
    <property type="reaction ID" value="UER00141"/>
</dbReference>
<dbReference type="Proteomes" id="UP000000653">
    <property type="component" value="Chromosome"/>
</dbReference>
<dbReference type="GO" id="GO:0005737">
    <property type="term" value="C:cytoplasm"/>
    <property type="evidence" value="ECO:0007669"/>
    <property type="project" value="TreeGrafter"/>
</dbReference>
<dbReference type="GO" id="GO:0000287">
    <property type="term" value="F:magnesium ion binding"/>
    <property type="evidence" value="ECO:0007669"/>
    <property type="project" value="UniProtKB-UniRule"/>
</dbReference>
<dbReference type="GO" id="GO:0004789">
    <property type="term" value="F:thiamine-phosphate diphosphorylase activity"/>
    <property type="evidence" value="ECO:0007669"/>
    <property type="project" value="UniProtKB-UniRule"/>
</dbReference>
<dbReference type="GO" id="GO:0009228">
    <property type="term" value="P:thiamine biosynthetic process"/>
    <property type="evidence" value="ECO:0007669"/>
    <property type="project" value="UniProtKB-KW"/>
</dbReference>
<dbReference type="GO" id="GO:0009229">
    <property type="term" value="P:thiamine diphosphate biosynthetic process"/>
    <property type="evidence" value="ECO:0007669"/>
    <property type="project" value="UniProtKB-UniRule"/>
</dbReference>
<dbReference type="CDD" id="cd00564">
    <property type="entry name" value="TMP_TenI"/>
    <property type="match status" value="1"/>
</dbReference>
<dbReference type="FunFam" id="3.20.20.70:FF:000276">
    <property type="entry name" value="Thiamine-phosphate synthase"/>
    <property type="match status" value="1"/>
</dbReference>
<dbReference type="Gene3D" id="3.20.20.70">
    <property type="entry name" value="Aldolase class I"/>
    <property type="match status" value="1"/>
</dbReference>
<dbReference type="HAMAP" id="MF_00097">
    <property type="entry name" value="TMP_synthase"/>
    <property type="match status" value="1"/>
</dbReference>
<dbReference type="InterPro" id="IPR013785">
    <property type="entry name" value="Aldolase_TIM"/>
</dbReference>
<dbReference type="InterPro" id="IPR036206">
    <property type="entry name" value="ThiamineP_synth_sf"/>
</dbReference>
<dbReference type="InterPro" id="IPR022998">
    <property type="entry name" value="ThiamineP_synth_TenI"/>
</dbReference>
<dbReference type="InterPro" id="IPR034291">
    <property type="entry name" value="TMP_synthase"/>
</dbReference>
<dbReference type="NCBIfam" id="TIGR00693">
    <property type="entry name" value="thiE"/>
    <property type="match status" value="1"/>
</dbReference>
<dbReference type="PANTHER" id="PTHR20857">
    <property type="entry name" value="THIAMINE-PHOSPHATE PYROPHOSPHORYLASE"/>
    <property type="match status" value="1"/>
</dbReference>
<dbReference type="PANTHER" id="PTHR20857:SF15">
    <property type="entry name" value="THIAMINE-PHOSPHATE SYNTHASE"/>
    <property type="match status" value="1"/>
</dbReference>
<dbReference type="Pfam" id="PF02581">
    <property type="entry name" value="TMP-TENI"/>
    <property type="match status" value="1"/>
</dbReference>
<dbReference type="SUPFAM" id="SSF51391">
    <property type="entry name" value="Thiamin phosphate synthase"/>
    <property type="match status" value="1"/>
</dbReference>
<gene>
    <name evidence="1" type="primary">thiE</name>
    <name type="ordered locus">PA14_12400</name>
</gene>
<reference key="1">
    <citation type="journal article" date="2006" name="Genome Biol.">
        <title>Genomic analysis reveals that Pseudomonas aeruginosa virulence is combinatorial.</title>
        <authorList>
            <person name="Lee D.G."/>
            <person name="Urbach J.M."/>
            <person name="Wu G."/>
            <person name="Liberati N.T."/>
            <person name="Feinbaum R.L."/>
            <person name="Miyata S."/>
            <person name="Diggins L.T."/>
            <person name="He J."/>
            <person name="Saucier M."/>
            <person name="Deziel E."/>
            <person name="Friedman L."/>
            <person name="Li L."/>
            <person name="Grills G."/>
            <person name="Montgomery K."/>
            <person name="Kucherlapati R."/>
            <person name="Rahme L.G."/>
            <person name="Ausubel F.M."/>
        </authorList>
    </citation>
    <scope>NUCLEOTIDE SEQUENCE [LARGE SCALE GENOMIC DNA]</scope>
    <source>
        <strain>UCBPP-PA14</strain>
    </source>
</reference>
<feature type="chain" id="PRO_1000008161" description="Thiamine-phosphate synthase">
    <location>
        <begin position="1"/>
        <end position="209"/>
    </location>
</feature>
<feature type="binding site" evidence="1">
    <location>
        <begin position="36"/>
        <end position="40"/>
    </location>
    <ligand>
        <name>4-amino-2-methyl-5-(diphosphooxymethyl)pyrimidine</name>
        <dbReference type="ChEBI" id="CHEBI:57841"/>
    </ligand>
</feature>
<feature type="binding site" evidence="1">
    <location>
        <position position="68"/>
    </location>
    <ligand>
        <name>4-amino-2-methyl-5-(diphosphooxymethyl)pyrimidine</name>
        <dbReference type="ChEBI" id="CHEBI:57841"/>
    </ligand>
</feature>
<feature type="binding site" evidence="1">
    <location>
        <position position="69"/>
    </location>
    <ligand>
        <name>Mg(2+)</name>
        <dbReference type="ChEBI" id="CHEBI:18420"/>
    </ligand>
</feature>
<feature type="binding site" evidence="1">
    <location>
        <position position="87"/>
    </location>
    <ligand>
        <name>Mg(2+)</name>
        <dbReference type="ChEBI" id="CHEBI:18420"/>
    </ligand>
</feature>
<feature type="binding site" evidence="1">
    <location>
        <position position="106"/>
    </location>
    <ligand>
        <name>4-amino-2-methyl-5-(diphosphooxymethyl)pyrimidine</name>
        <dbReference type="ChEBI" id="CHEBI:57841"/>
    </ligand>
</feature>
<feature type="binding site" evidence="1">
    <location>
        <begin position="133"/>
        <end position="135"/>
    </location>
    <ligand>
        <name>2-[(2R,5Z)-2-carboxy-4-methylthiazol-5(2H)-ylidene]ethyl phosphate</name>
        <dbReference type="ChEBI" id="CHEBI:62899"/>
    </ligand>
</feature>
<feature type="binding site" evidence="1">
    <location>
        <position position="136"/>
    </location>
    <ligand>
        <name>4-amino-2-methyl-5-(diphosphooxymethyl)pyrimidine</name>
        <dbReference type="ChEBI" id="CHEBI:57841"/>
    </ligand>
</feature>
<feature type="binding site" evidence="1">
    <location>
        <position position="163"/>
    </location>
    <ligand>
        <name>2-[(2R,5Z)-2-carboxy-4-methylthiazol-5(2H)-ylidene]ethyl phosphate</name>
        <dbReference type="ChEBI" id="CHEBI:62899"/>
    </ligand>
</feature>
<evidence type="ECO:0000255" key="1">
    <source>
        <dbReference type="HAMAP-Rule" id="MF_00097"/>
    </source>
</evidence>
<protein>
    <recommendedName>
        <fullName evidence="1">Thiamine-phosphate synthase</fullName>
        <shortName evidence="1">TP synthase</shortName>
        <shortName evidence="1">TPS</shortName>
        <ecNumber evidence="1">2.5.1.3</ecNumber>
    </recommendedName>
    <alternativeName>
        <fullName evidence="1">Thiamine-phosphate pyrophosphorylase</fullName>
        <shortName evidence="1">TMP pyrophosphorylase</shortName>
        <shortName evidence="1">TMP-PPase</shortName>
    </alternativeName>
</protein>
<proteinExistence type="inferred from homology"/>
<organism>
    <name type="scientific">Pseudomonas aeruginosa (strain UCBPP-PA14)</name>
    <dbReference type="NCBI Taxonomy" id="208963"/>
    <lineage>
        <taxon>Bacteria</taxon>
        <taxon>Pseudomonadati</taxon>
        <taxon>Pseudomonadota</taxon>
        <taxon>Gammaproteobacteria</taxon>
        <taxon>Pseudomonadales</taxon>
        <taxon>Pseudomonadaceae</taxon>
        <taxon>Pseudomonas</taxon>
    </lineage>
</organism>
<keyword id="KW-0460">Magnesium</keyword>
<keyword id="KW-0479">Metal-binding</keyword>
<keyword id="KW-0784">Thiamine biosynthesis</keyword>
<keyword id="KW-0808">Transferase</keyword>
<name>THIE_PSEAB</name>